<reference key="1">
    <citation type="journal article" date="2009" name="PLoS Genet.">
        <title>Organised genome dynamics in the Escherichia coli species results in highly diverse adaptive paths.</title>
        <authorList>
            <person name="Touchon M."/>
            <person name="Hoede C."/>
            <person name="Tenaillon O."/>
            <person name="Barbe V."/>
            <person name="Baeriswyl S."/>
            <person name="Bidet P."/>
            <person name="Bingen E."/>
            <person name="Bonacorsi S."/>
            <person name="Bouchier C."/>
            <person name="Bouvet O."/>
            <person name="Calteau A."/>
            <person name="Chiapello H."/>
            <person name="Clermont O."/>
            <person name="Cruveiller S."/>
            <person name="Danchin A."/>
            <person name="Diard M."/>
            <person name="Dossat C."/>
            <person name="Karoui M.E."/>
            <person name="Frapy E."/>
            <person name="Garry L."/>
            <person name="Ghigo J.M."/>
            <person name="Gilles A.M."/>
            <person name="Johnson J."/>
            <person name="Le Bouguenec C."/>
            <person name="Lescat M."/>
            <person name="Mangenot S."/>
            <person name="Martinez-Jehanne V."/>
            <person name="Matic I."/>
            <person name="Nassif X."/>
            <person name="Oztas S."/>
            <person name="Petit M.A."/>
            <person name="Pichon C."/>
            <person name="Rouy Z."/>
            <person name="Ruf C.S."/>
            <person name="Schneider D."/>
            <person name="Tourret J."/>
            <person name="Vacherie B."/>
            <person name="Vallenet D."/>
            <person name="Medigue C."/>
            <person name="Rocha E.P.C."/>
            <person name="Denamur E."/>
        </authorList>
    </citation>
    <scope>NUCLEOTIDE SEQUENCE [LARGE SCALE GENOMIC DNA]</scope>
    <source>
        <strain>UMN026 / ExPEC</strain>
    </source>
</reference>
<dbReference type="EC" id="4.1.1.11" evidence="1"/>
<dbReference type="EMBL" id="CU928163">
    <property type="protein sequence ID" value="CAR11351.1"/>
    <property type="molecule type" value="Genomic_DNA"/>
</dbReference>
<dbReference type="RefSeq" id="WP_000621515.1">
    <property type="nucleotide sequence ID" value="NC_011751.1"/>
</dbReference>
<dbReference type="RefSeq" id="YP_002410907.1">
    <property type="nucleotide sequence ID" value="NC_011751.1"/>
</dbReference>
<dbReference type="SMR" id="B7N801"/>
<dbReference type="STRING" id="585056.ECUMN_0129"/>
<dbReference type="GeneID" id="93777305"/>
<dbReference type="KEGG" id="eum:ECUMN_0129"/>
<dbReference type="PATRIC" id="fig|585056.7.peg.320"/>
<dbReference type="HOGENOM" id="CLU_115305_2_1_6"/>
<dbReference type="UniPathway" id="UPA00028">
    <property type="reaction ID" value="UER00002"/>
</dbReference>
<dbReference type="Proteomes" id="UP000007097">
    <property type="component" value="Chromosome"/>
</dbReference>
<dbReference type="GO" id="GO:0005829">
    <property type="term" value="C:cytosol"/>
    <property type="evidence" value="ECO:0007669"/>
    <property type="project" value="TreeGrafter"/>
</dbReference>
<dbReference type="GO" id="GO:0004068">
    <property type="term" value="F:aspartate 1-decarboxylase activity"/>
    <property type="evidence" value="ECO:0007669"/>
    <property type="project" value="UniProtKB-UniRule"/>
</dbReference>
<dbReference type="GO" id="GO:0006523">
    <property type="term" value="P:alanine biosynthetic process"/>
    <property type="evidence" value="ECO:0007669"/>
    <property type="project" value="InterPro"/>
</dbReference>
<dbReference type="GO" id="GO:0015940">
    <property type="term" value="P:pantothenate biosynthetic process"/>
    <property type="evidence" value="ECO:0007669"/>
    <property type="project" value="UniProtKB-UniRule"/>
</dbReference>
<dbReference type="CDD" id="cd06919">
    <property type="entry name" value="Asp_decarbox"/>
    <property type="match status" value="1"/>
</dbReference>
<dbReference type="FunFam" id="2.40.40.20:FF:000004">
    <property type="entry name" value="Aspartate 1-decarboxylase"/>
    <property type="match status" value="1"/>
</dbReference>
<dbReference type="Gene3D" id="2.40.40.20">
    <property type="match status" value="1"/>
</dbReference>
<dbReference type="HAMAP" id="MF_00446">
    <property type="entry name" value="PanD"/>
    <property type="match status" value="1"/>
</dbReference>
<dbReference type="InterPro" id="IPR009010">
    <property type="entry name" value="Asp_de-COase-like_dom_sf"/>
</dbReference>
<dbReference type="InterPro" id="IPR003190">
    <property type="entry name" value="Asp_decarbox"/>
</dbReference>
<dbReference type="NCBIfam" id="TIGR00223">
    <property type="entry name" value="panD"/>
    <property type="match status" value="1"/>
</dbReference>
<dbReference type="PANTHER" id="PTHR21012">
    <property type="entry name" value="ASPARTATE 1-DECARBOXYLASE"/>
    <property type="match status" value="1"/>
</dbReference>
<dbReference type="PANTHER" id="PTHR21012:SF0">
    <property type="entry name" value="ASPARTATE 1-DECARBOXYLASE"/>
    <property type="match status" value="1"/>
</dbReference>
<dbReference type="Pfam" id="PF02261">
    <property type="entry name" value="Asp_decarbox"/>
    <property type="match status" value="1"/>
</dbReference>
<dbReference type="PIRSF" id="PIRSF006246">
    <property type="entry name" value="Asp_decarbox"/>
    <property type="match status" value="1"/>
</dbReference>
<dbReference type="SUPFAM" id="SSF50692">
    <property type="entry name" value="ADC-like"/>
    <property type="match status" value="1"/>
</dbReference>
<sequence length="126" mass="13834">MIRTMLQGKLHRVKVTHADLHYEGSCAIDQDFLDAAGILENEAIDIWNVTNGKRFSTYAIAAERGSRIISVNGAAAHCASVGDIVIIASFVTMPDEEARTWRPNVAYFEGDNEMKRTAKAIPVQVA</sequence>
<comment type="function">
    <text evidence="1">Catalyzes the pyruvoyl-dependent decarboxylation of aspartate to produce beta-alanine.</text>
</comment>
<comment type="catalytic activity">
    <reaction evidence="1">
        <text>L-aspartate + H(+) = beta-alanine + CO2</text>
        <dbReference type="Rhea" id="RHEA:19497"/>
        <dbReference type="ChEBI" id="CHEBI:15378"/>
        <dbReference type="ChEBI" id="CHEBI:16526"/>
        <dbReference type="ChEBI" id="CHEBI:29991"/>
        <dbReference type="ChEBI" id="CHEBI:57966"/>
        <dbReference type="EC" id="4.1.1.11"/>
    </reaction>
</comment>
<comment type="cofactor">
    <cofactor evidence="1">
        <name>pyruvate</name>
        <dbReference type="ChEBI" id="CHEBI:15361"/>
    </cofactor>
    <text evidence="1">Binds 1 pyruvoyl group covalently per subunit.</text>
</comment>
<comment type="pathway">
    <text evidence="1">Cofactor biosynthesis; (R)-pantothenate biosynthesis; beta-alanine from L-aspartate: step 1/1.</text>
</comment>
<comment type="subunit">
    <text evidence="1">Heterooctamer of four alpha and four beta subunits.</text>
</comment>
<comment type="subcellular location">
    <subcellularLocation>
        <location evidence="1">Cytoplasm</location>
    </subcellularLocation>
</comment>
<comment type="PTM">
    <text evidence="1">Is synthesized initially as an inactive proenzyme, which is activated by self-cleavage at a specific serine bond to produce a beta-subunit with a hydroxyl group at its C-terminus and an alpha-subunit with a pyruvoyl group at its N-terminus.</text>
</comment>
<comment type="similarity">
    <text evidence="1">Belongs to the PanD family.</text>
</comment>
<feature type="chain" id="PRO_1000191997" description="Aspartate 1-decarboxylase beta chain" evidence="1">
    <location>
        <begin position="1"/>
        <end position="24"/>
    </location>
</feature>
<feature type="chain" id="PRO_1000191998" description="Aspartate 1-decarboxylase alpha chain" evidence="1">
    <location>
        <begin position="25"/>
        <end position="126"/>
    </location>
</feature>
<feature type="active site" description="Schiff-base intermediate with substrate; via pyruvic acid" evidence="1">
    <location>
        <position position="25"/>
    </location>
</feature>
<feature type="active site" description="Proton donor" evidence="1">
    <location>
        <position position="58"/>
    </location>
</feature>
<feature type="binding site" evidence="1">
    <location>
        <position position="57"/>
    </location>
    <ligand>
        <name>substrate</name>
    </ligand>
</feature>
<feature type="binding site" evidence="1">
    <location>
        <begin position="73"/>
        <end position="75"/>
    </location>
    <ligand>
        <name>substrate</name>
    </ligand>
</feature>
<feature type="modified residue" description="Pyruvic acid (Ser)" evidence="1">
    <location>
        <position position="25"/>
    </location>
</feature>
<evidence type="ECO:0000255" key="1">
    <source>
        <dbReference type="HAMAP-Rule" id="MF_00446"/>
    </source>
</evidence>
<gene>
    <name evidence="1" type="primary">panD</name>
    <name type="ordered locus">ECUMN_0129</name>
</gene>
<proteinExistence type="inferred from homology"/>
<keyword id="KW-0068">Autocatalytic cleavage</keyword>
<keyword id="KW-0963">Cytoplasm</keyword>
<keyword id="KW-0210">Decarboxylase</keyword>
<keyword id="KW-0456">Lyase</keyword>
<keyword id="KW-0566">Pantothenate biosynthesis</keyword>
<keyword id="KW-0670">Pyruvate</keyword>
<keyword id="KW-0704">Schiff base</keyword>
<keyword id="KW-0865">Zymogen</keyword>
<accession>B7N801</accession>
<protein>
    <recommendedName>
        <fullName evidence="1">Aspartate 1-decarboxylase</fullName>
        <ecNumber evidence="1">4.1.1.11</ecNumber>
    </recommendedName>
    <alternativeName>
        <fullName evidence="1">Aspartate alpha-decarboxylase</fullName>
    </alternativeName>
    <component>
        <recommendedName>
            <fullName evidence="1">Aspartate 1-decarboxylase beta chain</fullName>
        </recommendedName>
    </component>
    <component>
        <recommendedName>
            <fullName evidence="1">Aspartate 1-decarboxylase alpha chain</fullName>
        </recommendedName>
    </component>
</protein>
<organism>
    <name type="scientific">Escherichia coli O17:K52:H18 (strain UMN026 / ExPEC)</name>
    <dbReference type="NCBI Taxonomy" id="585056"/>
    <lineage>
        <taxon>Bacteria</taxon>
        <taxon>Pseudomonadati</taxon>
        <taxon>Pseudomonadota</taxon>
        <taxon>Gammaproteobacteria</taxon>
        <taxon>Enterobacterales</taxon>
        <taxon>Enterobacteriaceae</taxon>
        <taxon>Escherichia</taxon>
    </lineage>
</organism>
<name>PAND_ECOLU</name>